<proteinExistence type="evidence at protein level"/>
<name>LIMD1_RAT</name>
<comment type="function">
    <text evidence="1">Adapter or scaffold protein which participates in the assembly of numerous protein complexes and is involved in several cellular processes such as cell fate determination, cytoskeletal organization, repression of gene transcription, cell-cell adhesion, cell differentiation, proliferation and migration. Positively regulates microRNA (miRNA)-mediated gene silencing and is essential for P-body formation and integrity. Acts as a hypoxic regulator by bridging an association between the prolyl hydroxylases and VHL enabling efficient degradation of HIF1A. Acts as a transcriptional corepressor for SNAI1- and SNAI2/SLUG-dependent repression of E-cadherin transcription. Negatively regulates the Hippo signaling pathway and antagonizes phosphorylation of YAP1. Inhibits E2F-mediated transcription, and suppresses the expression of the majority of genes with E2F1-responsive elements. Regulates osteoblast development, function, differentiation and stress osteoclastogenesis. Enhances the ability of TRAF6 to activate adapter protein complex 1 (AP-1) and negatively regulates the canonical Wnt receptor signaling pathway in osteoblasts. May act as a tumor suppressor by inhibiting cell proliferation (By similarity).</text>
</comment>
<comment type="subunit">
    <text evidence="1">Interacts with SQSTM1 and RB1. Interacts with EIF4E, AGO1, AGO2, DCP2, DDX6, LATS1, LATS2, EGLN1/PHD2, EGLN2/PHD1 and EGLN3/PHD3. Interacts (via LIM zinc-binding 2) with VHL. Found in a complex composed of LIMD1, VHL, EGLN1/PHD2, ELOB and CUL2. Found in a complex with TRAF6, PRKCZ and SQSTM1. Interacts (via LIM domains) with TRAF6. Interacts (via LIM domains) with SNAI1 (via SNAG domain), SNAI2/SLUG (via SNAG domain) and SCRT1 (via SNAG domain) (By similarity).</text>
</comment>
<comment type="subcellular location">
    <subcellularLocation>
        <location evidence="1">Cytoplasm</location>
    </subcellularLocation>
    <subcellularLocation>
        <location evidence="1">Nucleus</location>
    </subcellularLocation>
    <subcellularLocation>
        <location evidence="1">Cytoplasm</location>
        <location evidence="1">P-body</location>
    </subcellularLocation>
    <subcellularLocation>
        <location evidence="1">Cell junction</location>
        <location evidence="1">Adherens junction</location>
    </subcellularLocation>
    <subcellularLocation>
        <location evidence="1">Cell junction</location>
        <location evidence="1">Focal adhesion</location>
    </subcellularLocation>
    <text evidence="1">Shuttles between cytoplasm and nucleus but is localized predominantly to the cytoplasm. Found in the nucleus but not nucleoli. Colocalizes with VCL in the focal adhesions (By similarity).</text>
</comment>
<comment type="PTM">
    <text evidence="1">Phosphorylated during mitosis.</text>
</comment>
<comment type="similarity">
    <text evidence="5">Belongs to the zyxin/ajuba family.</text>
</comment>
<organism>
    <name type="scientific">Rattus norvegicus</name>
    <name type="common">Rat</name>
    <dbReference type="NCBI Taxonomy" id="10116"/>
    <lineage>
        <taxon>Eukaryota</taxon>
        <taxon>Metazoa</taxon>
        <taxon>Chordata</taxon>
        <taxon>Craniata</taxon>
        <taxon>Vertebrata</taxon>
        <taxon>Euteleostomi</taxon>
        <taxon>Mammalia</taxon>
        <taxon>Eutheria</taxon>
        <taxon>Euarchontoglires</taxon>
        <taxon>Glires</taxon>
        <taxon>Rodentia</taxon>
        <taxon>Myomorpha</taxon>
        <taxon>Muroidea</taxon>
        <taxon>Muridae</taxon>
        <taxon>Murinae</taxon>
        <taxon>Rattus</taxon>
    </lineage>
</organism>
<gene>
    <name type="primary">Limd1</name>
</gene>
<accession>B5DEH0</accession>
<keyword id="KW-0965">Cell junction</keyword>
<keyword id="KW-0963">Cytoplasm</keyword>
<keyword id="KW-0440">LIM domain</keyword>
<keyword id="KW-0479">Metal-binding</keyword>
<keyword id="KW-0539">Nucleus</keyword>
<keyword id="KW-0597">Phosphoprotein</keyword>
<keyword id="KW-1185">Reference proteome</keyword>
<keyword id="KW-0677">Repeat</keyword>
<keyword id="KW-0678">Repressor</keyword>
<keyword id="KW-0943">RNA-mediated gene silencing</keyword>
<keyword id="KW-0804">Transcription</keyword>
<keyword id="KW-0805">Transcription regulation</keyword>
<keyword id="KW-0043">Tumor suppressor</keyword>
<keyword id="KW-0862">Zinc</keyword>
<evidence type="ECO:0000250" key="1"/>
<evidence type="ECO:0000250" key="2">
    <source>
        <dbReference type="UniProtKB" id="Q9UGP4"/>
    </source>
</evidence>
<evidence type="ECO:0000255" key="3">
    <source>
        <dbReference type="PROSITE-ProRule" id="PRU00125"/>
    </source>
</evidence>
<evidence type="ECO:0000256" key="4">
    <source>
        <dbReference type="SAM" id="MobiDB-lite"/>
    </source>
</evidence>
<evidence type="ECO:0000305" key="5"/>
<evidence type="ECO:0007744" key="6">
    <source>
    </source>
</evidence>
<feature type="chain" id="PRO_0000416961" description="LIM domain-containing protein 1">
    <location>
        <begin position="1"/>
        <end position="663"/>
    </location>
</feature>
<feature type="domain" description="LIM zinc-binding 1" evidence="3">
    <location>
        <begin position="457"/>
        <end position="518"/>
    </location>
</feature>
<feature type="domain" description="LIM zinc-binding 2" evidence="3">
    <location>
        <begin position="522"/>
        <end position="582"/>
    </location>
</feature>
<feature type="domain" description="LIM zinc-binding 3" evidence="3">
    <location>
        <begin position="583"/>
        <end position="651"/>
    </location>
</feature>
<feature type="region of interest" description="Mediates nuclear export" evidence="1">
    <location>
        <begin position="54"/>
        <end position="128"/>
    </location>
</feature>
<feature type="region of interest" description="Disordered" evidence="4">
    <location>
        <begin position="74"/>
        <end position="99"/>
    </location>
</feature>
<feature type="region of interest" description="Disordered" evidence="4">
    <location>
        <begin position="117"/>
        <end position="158"/>
    </location>
</feature>
<feature type="region of interest" description="Interaction with EGLN1/PHD2" evidence="1">
    <location>
        <begin position="180"/>
        <end position="251"/>
    </location>
</feature>
<feature type="region of interest" description="Disordered" evidence="4">
    <location>
        <begin position="230"/>
        <end position="253"/>
    </location>
</feature>
<feature type="region of interest" description="Disordered" evidence="4">
    <location>
        <begin position="267"/>
        <end position="297"/>
    </location>
</feature>
<feature type="region of interest" description="Disordered" evidence="4">
    <location>
        <begin position="335"/>
        <end position="416"/>
    </location>
</feature>
<feature type="region of interest" description="Interaction with RB1" evidence="1">
    <location>
        <begin position="391"/>
        <end position="429"/>
    </location>
</feature>
<feature type="region of interest" description="Necessary for nuclear localization" evidence="1">
    <location>
        <begin position="459"/>
        <end position="663"/>
    </location>
</feature>
<feature type="compositionally biased region" description="Polar residues" evidence="4">
    <location>
        <begin position="138"/>
        <end position="153"/>
    </location>
</feature>
<feature type="compositionally biased region" description="Polar residues" evidence="4">
    <location>
        <begin position="230"/>
        <end position="239"/>
    </location>
</feature>
<feature type="compositionally biased region" description="Polar residues" evidence="4">
    <location>
        <begin position="267"/>
        <end position="296"/>
    </location>
</feature>
<feature type="compositionally biased region" description="Polar residues" evidence="4">
    <location>
        <begin position="335"/>
        <end position="351"/>
    </location>
</feature>
<feature type="compositionally biased region" description="Polar residues" evidence="4">
    <location>
        <begin position="364"/>
        <end position="376"/>
    </location>
</feature>
<feature type="modified residue" description="Phosphoserine" evidence="2">
    <location>
        <position position="139"/>
    </location>
</feature>
<feature type="modified residue" description="Phosphoserine" evidence="2">
    <location>
        <position position="227"/>
    </location>
</feature>
<feature type="modified residue" description="Phosphoserine" evidence="6">
    <location>
        <position position="233"/>
    </location>
</feature>
<feature type="modified residue" description="Phosphoserine" evidence="2">
    <location>
        <position position="268"/>
    </location>
</feature>
<feature type="modified residue" description="Phosphoserine" evidence="2">
    <location>
        <position position="291"/>
    </location>
</feature>
<feature type="modified residue" description="Phosphoserine" evidence="6">
    <location>
        <position position="303"/>
    </location>
</feature>
<feature type="modified residue" description="Phosphoserine" evidence="6">
    <location>
        <position position="304"/>
    </location>
</feature>
<feature type="modified residue" description="Phosphoserine" evidence="2">
    <location>
        <position position="408"/>
    </location>
</feature>
<reference key="1">
    <citation type="journal article" date="2004" name="Nature">
        <title>Genome sequence of the Brown Norway rat yields insights into mammalian evolution.</title>
        <authorList>
            <person name="Gibbs R.A."/>
            <person name="Weinstock G.M."/>
            <person name="Metzker M.L."/>
            <person name="Muzny D.M."/>
            <person name="Sodergren E.J."/>
            <person name="Scherer S."/>
            <person name="Scott G."/>
            <person name="Steffen D."/>
            <person name="Worley K.C."/>
            <person name="Burch P.E."/>
            <person name="Okwuonu G."/>
            <person name="Hines S."/>
            <person name="Lewis L."/>
            <person name="Deramo C."/>
            <person name="Delgado O."/>
            <person name="Dugan-Rocha S."/>
            <person name="Miner G."/>
            <person name="Morgan M."/>
            <person name="Hawes A."/>
            <person name="Gill R."/>
            <person name="Holt R.A."/>
            <person name="Adams M.D."/>
            <person name="Amanatides P.G."/>
            <person name="Baden-Tillson H."/>
            <person name="Barnstead M."/>
            <person name="Chin S."/>
            <person name="Evans C.A."/>
            <person name="Ferriera S."/>
            <person name="Fosler C."/>
            <person name="Glodek A."/>
            <person name="Gu Z."/>
            <person name="Jennings D."/>
            <person name="Kraft C.L."/>
            <person name="Nguyen T."/>
            <person name="Pfannkoch C.M."/>
            <person name="Sitter C."/>
            <person name="Sutton G.G."/>
            <person name="Venter J.C."/>
            <person name="Woodage T."/>
            <person name="Smith D."/>
            <person name="Lee H.-M."/>
            <person name="Gustafson E."/>
            <person name="Cahill P."/>
            <person name="Kana A."/>
            <person name="Doucette-Stamm L."/>
            <person name="Weinstock K."/>
            <person name="Fechtel K."/>
            <person name="Weiss R.B."/>
            <person name="Dunn D.M."/>
            <person name="Green E.D."/>
            <person name="Blakesley R.W."/>
            <person name="Bouffard G.G."/>
            <person name="De Jong P.J."/>
            <person name="Osoegawa K."/>
            <person name="Zhu B."/>
            <person name="Marra M."/>
            <person name="Schein J."/>
            <person name="Bosdet I."/>
            <person name="Fjell C."/>
            <person name="Jones S."/>
            <person name="Krzywinski M."/>
            <person name="Mathewson C."/>
            <person name="Siddiqui A."/>
            <person name="Wye N."/>
            <person name="McPherson J."/>
            <person name="Zhao S."/>
            <person name="Fraser C.M."/>
            <person name="Shetty J."/>
            <person name="Shatsman S."/>
            <person name="Geer K."/>
            <person name="Chen Y."/>
            <person name="Abramzon S."/>
            <person name="Nierman W.C."/>
            <person name="Havlak P.H."/>
            <person name="Chen R."/>
            <person name="Durbin K.J."/>
            <person name="Egan A."/>
            <person name="Ren Y."/>
            <person name="Song X.-Z."/>
            <person name="Li B."/>
            <person name="Liu Y."/>
            <person name="Qin X."/>
            <person name="Cawley S."/>
            <person name="Cooney A.J."/>
            <person name="D'Souza L.M."/>
            <person name="Martin K."/>
            <person name="Wu J.Q."/>
            <person name="Gonzalez-Garay M.L."/>
            <person name="Jackson A.R."/>
            <person name="Kalafus K.J."/>
            <person name="McLeod M.P."/>
            <person name="Milosavljevic A."/>
            <person name="Virk D."/>
            <person name="Volkov A."/>
            <person name="Wheeler D.A."/>
            <person name="Zhang Z."/>
            <person name="Bailey J.A."/>
            <person name="Eichler E.E."/>
            <person name="Tuzun E."/>
            <person name="Birney E."/>
            <person name="Mongin E."/>
            <person name="Ureta-Vidal A."/>
            <person name="Woodwark C."/>
            <person name="Zdobnov E."/>
            <person name="Bork P."/>
            <person name="Suyama M."/>
            <person name="Torrents D."/>
            <person name="Alexandersson M."/>
            <person name="Trask B.J."/>
            <person name="Young J.M."/>
            <person name="Huang H."/>
            <person name="Wang H."/>
            <person name="Xing H."/>
            <person name="Daniels S."/>
            <person name="Gietzen D."/>
            <person name="Schmidt J."/>
            <person name="Stevens K."/>
            <person name="Vitt U."/>
            <person name="Wingrove J."/>
            <person name="Camara F."/>
            <person name="Mar Alba M."/>
            <person name="Abril J.F."/>
            <person name="Guigo R."/>
            <person name="Smit A."/>
            <person name="Dubchak I."/>
            <person name="Rubin E.M."/>
            <person name="Couronne O."/>
            <person name="Poliakov A."/>
            <person name="Huebner N."/>
            <person name="Ganten D."/>
            <person name="Goesele C."/>
            <person name="Hummel O."/>
            <person name="Kreitler T."/>
            <person name="Lee Y.-A."/>
            <person name="Monti J."/>
            <person name="Schulz H."/>
            <person name="Zimdahl H."/>
            <person name="Himmelbauer H."/>
            <person name="Lehrach H."/>
            <person name="Jacob H.J."/>
            <person name="Bromberg S."/>
            <person name="Gullings-Handley J."/>
            <person name="Jensen-Seaman M.I."/>
            <person name="Kwitek A.E."/>
            <person name="Lazar J."/>
            <person name="Pasko D."/>
            <person name="Tonellato P.J."/>
            <person name="Twigger S."/>
            <person name="Ponting C.P."/>
            <person name="Duarte J.M."/>
            <person name="Rice S."/>
            <person name="Goodstadt L."/>
            <person name="Beatson S.A."/>
            <person name="Emes R.D."/>
            <person name="Winter E.E."/>
            <person name="Webber C."/>
            <person name="Brandt P."/>
            <person name="Nyakatura G."/>
            <person name="Adetobi M."/>
            <person name="Chiaromonte F."/>
            <person name="Elnitski L."/>
            <person name="Eswara P."/>
            <person name="Hardison R.C."/>
            <person name="Hou M."/>
            <person name="Kolbe D."/>
            <person name="Makova K."/>
            <person name="Miller W."/>
            <person name="Nekrutenko A."/>
            <person name="Riemer C."/>
            <person name="Schwartz S."/>
            <person name="Taylor J."/>
            <person name="Yang S."/>
            <person name="Zhang Y."/>
            <person name="Lindpaintner K."/>
            <person name="Andrews T.D."/>
            <person name="Caccamo M."/>
            <person name="Clamp M."/>
            <person name="Clarke L."/>
            <person name="Curwen V."/>
            <person name="Durbin R.M."/>
            <person name="Eyras E."/>
            <person name="Searle S.M."/>
            <person name="Cooper G.M."/>
            <person name="Batzoglou S."/>
            <person name="Brudno M."/>
            <person name="Sidow A."/>
            <person name="Stone E.A."/>
            <person name="Payseur B.A."/>
            <person name="Bourque G."/>
            <person name="Lopez-Otin C."/>
            <person name="Puente X.S."/>
            <person name="Chakrabarti K."/>
            <person name="Chatterji S."/>
            <person name="Dewey C."/>
            <person name="Pachter L."/>
            <person name="Bray N."/>
            <person name="Yap V.B."/>
            <person name="Caspi A."/>
            <person name="Tesler G."/>
            <person name="Pevzner P.A."/>
            <person name="Haussler D."/>
            <person name="Roskin K.M."/>
            <person name="Baertsch R."/>
            <person name="Clawson H."/>
            <person name="Furey T.S."/>
            <person name="Hinrichs A.S."/>
            <person name="Karolchik D."/>
            <person name="Kent W.J."/>
            <person name="Rosenbloom K.R."/>
            <person name="Trumbower H."/>
            <person name="Weirauch M."/>
            <person name="Cooper D.N."/>
            <person name="Stenson P.D."/>
            <person name="Ma B."/>
            <person name="Brent M."/>
            <person name="Arumugam M."/>
            <person name="Shteynberg D."/>
            <person name="Copley R.R."/>
            <person name="Taylor M.S."/>
            <person name="Riethman H."/>
            <person name="Mudunuri U."/>
            <person name="Peterson J."/>
            <person name="Guyer M."/>
            <person name="Felsenfeld A."/>
            <person name="Old S."/>
            <person name="Mockrin S."/>
            <person name="Collins F.S."/>
        </authorList>
    </citation>
    <scope>NUCLEOTIDE SEQUENCE [LARGE SCALE GENOMIC DNA]</scope>
    <source>
        <strain>Brown Norway</strain>
    </source>
</reference>
<reference key="2">
    <citation type="submission" date="2005-09" db="EMBL/GenBank/DDBJ databases">
        <authorList>
            <person name="Mural R.J."/>
            <person name="Adams M.D."/>
            <person name="Myers E.W."/>
            <person name="Smith H.O."/>
            <person name="Venter J.C."/>
        </authorList>
    </citation>
    <scope>NUCLEOTIDE SEQUENCE [LARGE SCALE GENOMIC DNA]</scope>
    <source>
        <strain>Brown Norway</strain>
    </source>
</reference>
<reference key="3">
    <citation type="journal article" date="2004" name="Genome Res.">
        <title>The status, quality, and expansion of the NIH full-length cDNA project: the Mammalian Gene Collection (MGC).</title>
        <authorList>
            <consortium name="The MGC Project Team"/>
        </authorList>
    </citation>
    <scope>NUCLEOTIDE SEQUENCE [LARGE SCALE MRNA]</scope>
    <source>
        <tissue>Prostate</tissue>
    </source>
</reference>
<reference key="4">
    <citation type="journal article" date="2012" name="Nat. Commun.">
        <title>Quantitative maps of protein phosphorylation sites across 14 different rat organs and tissues.</title>
        <authorList>
            <person name="Lundby A."/>
            <person name="Secher A."/>
            <person name="Lage K."/>
            <person name="Nordsborg N.B."/>
            <person name="Dmytriyev A."/>
            <person name="Lundby C."/>
            <person name="Olsen J.V."/>
        </authorList>
    </citation>
    <scope>PHOSPHORYLATION [LARGE SCALE ANALYSIS] AT SER-233; SER-303 AND SER-304</scope>
    <scope>IDENTIFICATION BY MASS SPECTROMETRY [LARGE SCALE ANALYSIS]</scope>
</reference>
<dbReference type="EMBL" id="AABR03062206">
    <property type="status" value="NOT_ANNOTATED_CDS"/>
    <property type="molecule type" value="Genomic_DNA"/>
</dbReference>
<dbReference type="EMBL" id="AABR03062956">
    <property type="status" value="NOT_ANNOTATED_CDS"/>
    <property type="molecule type" value="Genomic_DNA"/>
</dbReference>
<dbReference type="EMBL" id="CH473954">
    <property type="protein sequence ID" value="EDL76759.1"/>
    <property type="molecule type" value="Genomic_DNA"/>
</dbReference>
<dbReference type="EMBL" id="BC168666">
    <property type="protein sequence ID" value="AAI68666.1"/>
    <property type="molecule type" value="mRNA"/>
</dbReference>
<dbReference type="RefSeq" id="NP_001106208.1">
    <property type="nucleotide sequence ID" value="NM_001112737.3"/>
</dbReference>
<dbReference type="RefSeq" id="XP_038937591.1">
    <property type="nucleotide sequence ID" value="XM_039081663.2"/>
</dbReference>
<dbReference type="FunCoup" id="B5DEH0">
    <property type="interactions" value="954"/>
</dbReference>
<dbReference type="STRING" id="10116.ENSRNOP00000006554"/>
<dbReference type="GlyGen" id="B5DEH0">
    <property type="glycosylation" value="1 site"/>
</dbReference>
<dbReference type="iPTMnet" id="B5DEH0"/>
<dbReference type="PhosphoSitePlus" id="B5DEH0"/>
<dbReference type="PaxDb" id="10116-ENSRNOP00000006554"/>
<dbReference type="PeptideAtlas" id="B5DEH0"/>
<dbReference type="Ensembl" id="ENSRNOT00000006554.8">
    <property type="protein sequence ID" value="ENSRNOP00000006554.5"/>
    <property type="gene ID" value="ENSRNOG00000004837.8"/>
</dbReference>
<dbReference type="GeneID" id="316101"/>
<dbReference type="KEGG" id="rno:316101"/>
<dbReference type="UCSC" id="RGD:1309830">
    <property type="organism name" value="rat"/>
</dbReference>
<dbReference type="AGR" id="RGD:1309830"/>
<dbReference type="CTD" id="8994"/>
<dbReference type="RGD" id="1309830">
    <property type="gene designation" value="Limd1"/>
</dbReference>
<dbReference type="eggNOG" id="KOG1701">
    <property type="taxonomic scope" value="Eukaryota"/>
</dbReference>
<dbReference type="GeneTree" id="ENSGT00940000159019"/>
<dbReference type="HOGENOM" id="CLU_001357_11_1_1"/>
<dbReference type="InParanoid" id="B5DEH0"/>
<dbReference type="OMA" id="SCKEGPP"/>
<dbReference type="OrthoDB" id="75660at9989"/>
<dbReference type="PhylomeDB" id="B5DEH0"/>
<dbReference type="TreeFam" id="TF320310"/>
<dbReference type="Reactome" id="R-RNO-1234176">
    <property type="pathway name" value="Oxygen-dependent proline hydroxylation of Hypoxia-inducible Factor Alpha"/>
</dbReference>
<dbReference type="PRO" id="PR:B5DEH0"/>
<dbReference type="Proteomes" id="UP000002494">
    <property type="component" value="Chromosome 8"/>
</dbReference>
<dbReference type="Proteomes" id="UP000234681">
    <property type="component" value="Chromosome 8"/>
</dbReference>
<dbReference type="Bgee" id="ENSRNOG00000004837">
    <property type="expression patterns" value="Expressed in heart and 18 other cell types or tissues"/>
</dbReference>
<dbReference type="GO" id="GO:0005912">
    <property type="term" value="C:adherens junction"/>
    <property type="evidence" value="ECO:0000250"/>
    <property type="project" value="UniProtKB"/>
</dbReference>
<dbReference type="GO" id="GO:0005737">
    <property type="term" value="C:cytoplasm"/>
    <property type="evidence" value="ECO:0000250"/>
    <property type="project" value="UniProtKB"/>
</dbReference>
<dbReference type="GO" id="GO:0005925">
    <property type="term" value="C:focal adhesion"/>
    <property type="evidence" value="ECO:0000250"/>
    <property type="project" value="UniProtKB"/>
</dbReference>
<dbReference type="GO" id="GO:0005654">
    <property type="term" value="C:nucleoplasm"/>
    <property type="evidence" value="ECO:0007669"/>
    <property type="project" value="Ensembl"/>
</dbReference>
<dbReference type="GO" id="GO:0005634">
    <property type="term" value="C:nucleus"/>
    <property type="evidence" value="ECO:0000250"/>
    <property type="project" value="UniProtKB"/>
</dbReference>
<dbReference type="GO" id="GO:0000932">
    <property type="term" value="C:P-body"/>
    <property type="evidence" value="ECO:0000266"/>
    <property type="project" value="RGD"/>
</dbReference>
<dbReference type="GO" id="GO:0005886">
    <property type="term" value="C:plasma membrane"/>
    <property type="evidence" value="ECO:0007669"/>
    <property type="project" value="Ensembl"/>
</dbReference>
<dbReference type="GO" id="GO:0016442">
    <property type="term" value="C:RISC complex"/>
    <property type="evidence" value="ECO:0000266"/>
    <property type="project" value="RGD"/>
</dbReference>
<dbReference type="GO" id="GO:0005667">
    <property type="term" value="C:transcription regulator complex"/>
    <property type="evidence" value="ECO:0000318"/>
    <property type="project" value="GO_Central"/>
</dbReference>
<dbReference type="GO" id="GO:0046872">
    <property type="term" value="F:metal ion binding"/>
    <property type="evidence" value="ECO:0007669"/>
    <property type="project" value="UniProtKB-KW"/>
</dbReference>
<dbReference type="GO" id="GO:0003714">
    <property type="term" value="F:transcription corepressor activity"/>
    <property type="evidence" value="ECO:0000250"/>
    <property type="project" value="UniProtKB"/>
</dbReference>
<dbReference type="GO" id="GO:0016477">
    <property type="term" value="P:cell migration"/>
    <property type="evidence" value="ECO:0000266"/>
    <property type="project" value="RGD"/>
</dbReference>
<dbReference type="GO" id="GO:0007010">
    <property type="term" value="P:cytoskeleton organization"/>
    <property type="evidence" value="ECO:0000266"/>
    <property type="project" value="RGD"/>
</dbReference>
<dbReference type="GO" id="GO:0035278">
    <property type="term" value="P:miRNA-mediated gene silencing by inhibition of translation"/>
    <property type="evidence" value="ECO:0000250"/>
    <property type="project" value="UniProtKB"/>
</dbReference>
<dbReference type="GO" id="GO:0035195">
    <property type="term" value="P:miRNA-mediated post-transcriptional gene silencing"/>
    <property type="evidence" value="ECO:0000266"/>
    <property type="project" value="RGD"/>
</dbReference>
<dbReference type="GO" id="GO:0090090">
    <property type="term" value="P:negative regulation of canonical Wnt signaling pathway"/>
    <property type="evidence" value="ECO:0000250"/>
    <property type="project" value="UniProtKB"/>
</dbReference>
<dbReference type="GO" id="GO:0045892">
    <property type="term" value="P:negative regulation of DNA-templated transcription"/>
    <property type="evidence" value="ECO:0000250"/>
    <property type="project" value="UniProtKB"/>
</dbReference>
<dbReference type="GO" id="GO:0035331">
    <property type="term" value="P:negative regulation of hippo signaling"/>
    <property type="evidence" value="ECO:0000250"/>
    <property type="project" value="UniProtKB"/>
</dbReference>
<dbReference type="GO" id="GO:0045668">
    <property type="term" value="P:negative regulation of osteoblast differentiation"/>
    <property type="evidence" value="ECO:0000250"/>
    <property type="project" value="UniProtKB"/>
</dbReference>
<dbReference type="GO" id="GO:0002076">
    <property type="term" value="P:osteoblast development"/>
    <property type="evidence" value="ECO:0000250"/>
    <property type="project" value="UniProtKB"/>
</dbReference>
<dbReference type="GO" id="GO:0033962">
    <property type="term" value="P:P-body assembly"/>
    <property type="evidence" value="ECO:0000266"/>
    <property type="project" value="RGD"/>
</dbReference>
<dbReference type="GO" id="GO:0016310">
    <property type="term" value="P:phosphorylation"/>
    <property type="evidence" value="ECO:0000250"/>
    <property type="project" value="UniProtKB"/>
</dbReference>
<dbReference type="GO" id="GO:0008360">
    <property type="term" value="P:regulation of cell shape"/>
    <property type="evidence" value="ECO:0000266"/>
    <property type="project" value="RGD"/>
</dbReference>
<dbReference type="GO" id="GO:0006355">
    <property type="term" value="P:regulation of DNA-templated transcription"/>
    <property type="evidence" value="ECO:0000318"/>
    <property type="project" value="GO_Central"/>
</dbReference>
<dbReference type="GO" id="GO:0001666">
    <property type="term" value="P:response to hypoxia"/>
    <property type="evidence" value="ECO:0000250"/>
    <property type="project" value="UniProtKB"/>
</dbReference>
<dbReference type="CDD" id="cd09352">
    <property type="entry name" value="LIM1_Ajuba_like"/>
    <property type="match status" value="1"/>
</dbReference>
<dbReference type="CDD" id="cd09355">
    <property type="entry name" value="LIM2_Ajuba_like"/>
    <property type="match status" value="1"/>
</dbReference>
<dbReference type="CDD" id="cd09438">
    <property type="entry name" value="LIM3_Ajuba_like"/>
    <property type="match status" value="1"/>
</dbReference>
<dbReference type="FunFam" id="2.10.110.10:FF:000028">
    <property type="entry name" value="LIM domain-containing protein 1"/>
    <property type="match status" value="1"/>
</dbReference>
<dbReference type="FunFam" id="2.10.110.10:FF:000037">
    <property type="entry name" value="LIM domain-containing protein 1"/>
    <property type="match status" value="1"/>
</dbReference>
<dbReference type="Gene3D" id="2.10.110.10">
    <property type="entry name" value="Cysteine Rich Protein"/>
    <property type="match status" value="3"/>
</dbReference>
<dbReference type="InterPro" id="IPR047172">
    <property type="entry name" value="Ajuba-like"/>
</dbReference>
<dbReference type="InterPro" id="IPR047245">
    <property type="entry name" value="Ajuba-like_LIM1"/>
</dbReference>
<dbReference type="InterPro" id="IPR047247">
    <property type="entry name" value="Ajuba-like_LIM2"/>
</dbReference>
<dbReference type="InterPro" id="IPR047248">
    <property type="entry name" value="Ajuba-like_LIM3"/>
</dbReference>
<dbReference type="InterPro" id="IPR001781">
    <property type="entry name" value="Znf_LIM"/>
</dbReference>
<dbReference type="PANTHER" id="PTHR24219:SF3">
    <property type="entry name" value="LIM DOMAIN-CONTAINING PROTEIN 1"/>
    <property type="match status" value="1"/>
</dbReference>
<dbReference type="PANTHER" id="PTHR24219">
    <property type="entry name" value="LIM DOMAIN-CONTAINING PROTEIN JUB"/>
    <property type="match status" value="1"/>
</dbReference>
<dbReference type="Pfam" id="PF00412">
    <property type="entry name" value="LIM"/>
    <property type="match status" value="3"/>
</dbReference>
<dbReference type="SMART" id="SM00132">
    <property type="entry name" value="LIM"/>
    <property type="match status" value="3"/>
</dbReference>
<dbReference type="SUPFAM" id="SSF57716">
    <property type="entry name" value="Glucocorticoid receptor-like (DNA-binding domain)"/>
    <property type="match status" value="2"/>
</dbReference>
<dbReference type="PROSITE" id="PS00478">
    <property type="entry name" value="LIM_DOMAIN_1"/>
    <property type="match status" value="2"/>
</dbReference>
<dbReference type="PROSITE" id="PS50023">
    <property type="entry name" value="LIM_DOMAIN_2"/>
    <property type="match status" value="3"/>
</dbReference>
<sequence length="663" mass="71393">MDKYDDLGLEASKFIEDLNMYEASKDGLFRVDKGASNNPEFEETRRVFATKMAKIHLQQQQQQQLLQEEALPRAGRSPINGGNRQGVSSKLAADGAAKPPLAVPTVAPGLATTTMAVQSSYPPQEQRTRPSAHGARPGSQNCGSREGPVSSQRPALHGLGPCEDPSCLTHGDYYDNFSLASPQWGDKPEESPSMSLSVGSGWPGCPGNDSLSHRSCGDSHPYHPQLSMCSGRSFESGQDSGIGGHSSEKPTGLWSTASSQRVNLGFSSTGLENGTPAQPKGTTVSAPMVPSSTSQGACLRRDSSLGYEAPGRVFKPLVDTQPWLQDGPKSYLSVSAPLSSTTSKDNAQTGMTAGLDPKLGCVESGTSPKPSPTSNVHPVMSAPSELSCKESPPSWSTDSSLGPVLPESPTPSRVRLPCQTLTPGPELGPSTAELKLEALTQRLEREMDAHPKADYFGACVKCSKGVFGAGQACQAMGDLYHDACFTCAACSRKLRGKAFYFVNGKVFCEEDFLYSGFQQSADRCFLCGHLIMDMILQALGKSYHPGCFRCVICNECLDGVPFTVDSENKIYCVRDYHKVLAPKCAACGLPILPPEGSDETIRVVSMDRDYHVECYHCEDCGLELNDEDGHRCYPLEDHLFCHSCHVKRLEKGPSPASLHQHHF</sequence>
<protein>
    <recommendedName>
        <fullName>LIM domain-containing protein 1</fullName>
    </recommendedName>
</protein>